<organism>
    <name type="scientific">Streptococcus pyogenes serotype M3 (strain SSI-1)</name>
    <dbReference type="NCBI Taxonomy" id="193567"/>
    <lineage>
        <taxon>Bacteria</taxon>
        <taxon>Bacillati</taxon>
        <taxon>Bacillota</taxon>
        <taxon>Bacilli</taxon>
        <taxon>Lactobacillales</taxon>
        <taxon>Streptococcaceae</taxon>
        <taxon>Streptococcus</taxon>
    </lineage>
</organism>
<evidence type="ECO:0000255" key="1">
    <source>
        <dbReference type="HAMAP-Rule" id="MF_00274"/>
    </source>
</evidence>
<sequence>MMNMQNMMRQAQKLQKQMEQKQADLAAMQFTGKSAQDLVTATFTGDKKLVGIDFKEAVVDPEDVETLQDMTTQAINDALTQIDEATKKTLGAFAGKLPF</sequence>
<reference key="1">
    <citation type="journal article" date="2003" name="Genome Res.">
        <title>Genome sequence of an M3 strain of Streptococcus pyogenes reveals a large-scale genomic rearrangement in invasive strains and new insights into phage evolution.</title>
        <authorList>
            <person name="Nakagawa I."/>
            <person name="Kurokawa K."/>
            <person name="Yamashita A."/>
            <person name="Nakata M."/>
            <person name="Tomiyasu Y."/>
            <person name="Okahashi N."/>
            <person name="Kawabata S."/>
            <person name="Yamazaki K."/>
            <person name="Shiba T."/>
            <person name="Yasunaga T."/>
            <person name="Hayashi H."/>
            <person name="Hattori M."/>
            <person name="Hamada S."/>
        </authorList>
    </citation>
    <scope>NUCLEOTIDE SEQUENCE [LARGE SCALE GENOMIC DNA]</scope>
    <source>
        <strain>SSI-1</strain>
    </source>
</reference>
<accession>P0DG83</accession>
<accession>Q8K5X6</accession>
<name>Y1606_STRPQ</name>
<feature type="chain" id="PRO_0000411631" description="Nucleoid-associated protein SPs0261">
    <location>
        <begin position="1"/>
        <end position="99"/>
    </location>
</feature>
<keyword id="KW-0963">Cytoplasm</keyword>
<keyword id="KW-0238">DNA-binding</keyword>
<comment type="function">
    <text evidence="1">Binds to DNA and alters its conformation. May be involved in regulation of gene expression, nucleoid organization and DNA protection.</text>
</comment>
<comment type="subunit">
    <text evidence="1">Homodimer.</text>
</comment>
<comment type="subcellular location">
    <subcellularLocation>
        <location evidence="1">Cytoplasm</location>
        <location evidence="1">Nucleoid</location>
    </subcellularLocation>
</comment>
<comment type="similarity">
    <text evidence="1">Belongs to the YbaB/EbfC family.</text>
</comment>
<gene>
    <name type="ordered locus">SPs0261</name>
</gene>
<proteinExistence type="inferred from homology"/>
<dbReference type="EMBL" id="BA000034">
    <property type="protein sequence ID" value="BAC63356.1"/>
    <property type="molecule type" value="Genomic_DNA"/>
</dbReference>
<dbReference type="RefSeq" id="WP_002992264.1">
    <property type="nucleotide sequence ID" value="NC_004606.1"/>
</dbReference>
<dbReference type="SMR" id="P0DG83"/>
<dbReference type="KEGG" id="sps:SPs0261"/>
<dbReference type="HOGENOM" id="CLU_140930_1_1_9"/>
<dbReference type="GO" id="GO:0043590">
    <property type="term" value="C:bacterial nucleoid"/>
    <property type="evidence" value="ECO:0007669"/>
    <property type="project" value="UniProtKB-UniRule"/>
</dbReference>
<dbReference type="GO" id="GO:0005829">
    <property type="term" value="C:cytosol"/>
    <property type="evidence" value="ECO:0007669"/>
    <property type="project" value="TreeGrafter"/>
</dbReference>
<dbReference type="GO" id="GO:0003677">
    <property type="term" value="F:DNA binding"/>
    <property type="evidence" value="ECO:0007669"/>
    <property type="project" value="UniProtKB-UniRule"/>
</dbReference>
<dbReference type="Gene3D" id="3.30.1310.10">
    <property type="entry name" value="Nucleoid-associated protein YbaB-like domain"/>
    <property type="match status" value="1"/>
</dbReference>
<dbReference type="HAMAP" id="MF_00274">
    <property type="entry name" value="DNA_YbaB_EbfC"/>
    <property type="match status" value="1"/>
</dbReference>
<dbReference type="InterPro" id="IPR036894">
    <property type="entry name" value="YbaB-like_sf"/>
</dbReference>
<dbReference type="InterPro" id="IPR004401">
    <property type="entry name" value="YbaB/EbfC"/>
</dbReference>
<dbReference type="NCBIfam" id="TIGR00103">
    <property type="entry name" value="DNA_YbaB_EbfC"/>
    <property type="match status" value="1"/>
</dbReference>
<dbReference type="PANTHER" id="PTHR33449">
    <property type="entry name" value="NUCLEOID-ASSOCIATED PROTEIN YBAB"/>
    <property type="match status" value="1"/>
</dbReference>
<dbReference type="PANTHER" id="PTHR33449:SF1">
    <property type="entry name" value="NUCLEOID-ASSOCIATED PROTEIN YBAB"/>
    <property type="match status" value="1"/>
</dbReference>
<dbReference type="Pfam" id="PF02575">
    <property type="entry name" value="YbaB_DNA_bd"/>
    <property type="match status" value="1"/>
</dbReference>
<dbReference type="PIRSF" id="PIRSF004555">
    <property type="entry name" value="UCP004555"/>
    <property type="match status" value="1"/>
</dbReference>
<dbReference type="SUPFAM" id="SSF82607">
    <property type="entry name" value="YbaB-like"/>
    <property type="match status" value="1"/>
</dbReference>
<protein>
    <recommendedName>
        <fullName evidence="1">Nucleoid-associated protein SPs0261</fullName>
    </recommendedName>
</protein>